<gene>
    <name evidence="1" type="primary">minE</name>
    <name type="ordered locus">A1S_0879</name>
</gene>
<reference key="1">
    <citation type="journal article" date="2007" name="Genes Dev.">
        <title>New insights into Acinetobacter baumannii pathogenesis revealed by high-density pyrosequencing and transposon mutagenesis.</title>
        <authorList>
            <person name="Smith M.G."/>
            <person name="Gianoulis T.A."/>
            <person name="Pukatzki S."/>
            <person name="Mekalanos J.J."/>
            <person name="Ornston L.N."/>
            <person name="Gerstein M."/>
            <person name="Snyder M."/>
        </authorList>
    </citation>
    <scope>NUCLEOTIDE SEQUENCE [LARGE SCALE GENOMIC DNA]</scope>
    <source>
        <strain>ATCC 17978 / DSM 105126 / CIP 53.77 / LMG 1025 / NCDC KC755 / 5377</strain>
    </source>
</reference>
<dbReference type="EMBL" id="CP000521">
    <property type="protein sequence ID" value="ABO11311.1"/>
    <property type="molecule type" value="Genomic_DNA"/>
</dbReference>
<dbReference type="RefSeq" id="WP_000896934.1">
    <property type="nucleotide sequence ID" value="NZ_CP053098.1"/>
</dbReference>
<dbReference type="GeneID" id="9383489"/>
<dbReference type="KEGG" id="acb:A1S_0879"/>
<dbReference type="HOGENOM" id="CLU_137929_2_3_6"/>
<dbReference type="GO" id="GO:0051301">
    <property type="term" value="P:cell division"/>
    <property type="evidence" value="ECO:0007669"/>
    <property type="project" value="UniProtKB-KW"/>
</dbReference>
<dbReference type="GO" id="GO:0032955">
    <property type="term" value="P:regulation of division septum assembly"/>
    <property type="evidence" value="ECO:0007669"/>
    <property type="project" value="InterPro"/>
</dbReference>
<dbReference type="Gene3D" id="3.30.1070.10">
    <property type="entry name" value="Cell division topological specificity factor MinE"/>
    <property type="match status" value="1"/>
</dbReference>
<dbReference type="HAMAP" id="MF_00262">
    <property type="entry name" value="MinE"/>
    <property type="match status" value="1"/>
</dbReference>
<dbReference type="InterPro" id="IPR005527">
    <property type="entry name" value="MinE"/>
</dbReference>
<dbReference type="InterPro" id="IPR036707">
    <property type="entry name" value="MinE_sf"/>
</dbReference>
<dbReference type="NCBIfam" id="TIGR01215">
    <property type="entry name" value="minE"/>
    <property type="match status" value="1"/>
</dbReference>
<dbReference type="NCBIfam" id="NF001422">
    <property type="entry name" value="PRK00296.1"/>
    <property type="match status" value="1"/>
</dbReference>
<dbReference type="Pfam" id="PF03776">
    <property type="entry name" value="MinE"/>
    <property type="match status" value="1"/>
</dbReference>
<dbReference type="SUPFAM" id="SSF55229">
    <property type="entry name" value="Cell division protein MinE topological specificity domain"/>
    <property type="match status" value="1"/>
</dbReference>
<sequence>MAGFWSKLFSSEEKPSSAQTAKDRLKVIVASEQGLGRRLSQDKIDQMKKEIMQVVSRYVSGVGEQHIQMQVRSEANIEMLEMNINLPEER</sequence>
<proteinExistence type="inferred from homology"/>
<accession>A3M317</accession>
<evidence type="ECO:0000255" key="1">
    <source>
        <dbReference type="HAMAP-Rule" id="MF_00262"/>
    </source>
</evidence>
<evidence type="ECO:0000256" key="2">
    <source>
        <dbReference type="SAM" id="MobiDB-lite"/>
    </source>
</evidence>
<comment type="function">
    <text evidence="1">Prevents the cell division inhibition by proteins MinC and MinD at internal division sites while permitting inhibition at polar sites. This ensures cell division at the proper site by restricting the formation of a division septum at the midpoint of the long axis of the cell.</text>
</comment>
<comment type="similarity">
    <text evidence="1">Belongs to the MinE family.</text>
</comment>
<protein>
    <recommendedName>
        <fullName evidence="1">Cell division topological specificity factor</fullName>
    </recommendedName>
</protein>
<keyword id="KW-0131">Cell cycle</keyword>
<keyword id="KW-0132">Cell division</keyword>
<organism>
    <name type="scientific">Acinetobacter baumannii (strain ATCC 17978 / DSM 105126 / CIP 53.77 / LMG 1025 / NCDC KC755 / 5377)</name>
    <dbReference type="NCBI Taxonomy" id="400667"/>
    <lineage>
        <taxon>Bacteria</taxon>
        <taxon>Pseudomonadati</taxon>
        <taxon>Pseudomonadota</taxon>
        <taxon>Gammaproteobacteria</taxon>
        <taxon>Moraxellales</taxon>
        <taxon>Moraxellaceae</taxon>
        <taxon>Acinetobacter</taxon>
        <taxon>Acinetobacter calcoaceticus/baumannii complex</taxon>
    </lineage>
</organism>
<feature type="chain" id="PRO_0000298063" description="Cell division topological specificity factor">
    <location>
        <begin position="1"/>
        <end position="90"/>
    </location>
</feature>
<feature type="region of interest" description="Disordered" evidence="2">
    <location>
        <begin position="1"/>
        <end position="21"/>
    </location>
</feature>
<feature type="compositionally biased region" description="Basic and acidic residues" evidence="2">
    <location>
        <begin position="10"/>
        <end position="21"/>
    </location>
</feature>
<name>MINE_ACIBT</name>